<gene>
    <name evidence="1" type="primary">petG</name>
</gene>
<sequence>MVEVLLSGIVLGLVPVTITGLFVAAYLQYRRGNQFGL</sequence>
<name>PETG_EMIHU</name>
<comment type="function">
    <text evidence="1">Component of the cytochrome b6-f complex, which mediates electron transfer between photosystem II (PSII) and photosystem I (PSI), cyclic electron flow around PSI, and state transitions. PetG is required for either the stability or assembly of the cytochrome b6-f complex.</text>
</comment>
<comment type="subunit">
    <text evidence="1">The 4 large subunits of the cytochrome b6-f complex are cytochrome b6, subunit IV (17 kDa polypeptide, PetD), cytochrome f and the Rieske protein, while the 4 small subunits are PetG, PetL, PetM and PetN. The complex functions as a dimer.</text>
</comment>
<comment type="subcellular location">
    <subcellularLocation>
        <location evidence="1">Plastid</location>
        <location evidence="1">Chloroplast thylakoid membrane</location>
        <topology evidence="1">Single-pass membrane protein</topology>
    </subcellularLocation>
</comment>
<comment type="similarity">
    <text evidence="1">Belongs to the PetG family.</text>
</comment>
<feature type="chain" id="PRO_0000275518" description="Cytochrome b6-f complex subunit 5">
    <location>
        <begin position="1"/>
        <end position="37"/>
    </location>
</feature>
<feature type="transmembrane region" description="Helical" evidence="1">
    <location>
        <begin position="5"/>
        <end position="25"/>
    </location>
</feature>
<geneLocation type="chloroplast"/>
<protein>
    <recommendedName>
        <fullName evidence="1">Cytochrome b6-f complex subunit 5</fullName>
    </recommendedName>
    <alternativeName>
        <fullName evidence="1">Cytochrome b6-f complex subunit PetG</fullName>
    </alternativeName>
    <alternativeName>
        <fullName evidence="1">Cytochrome b6-f complex subunit V</fullName>
    </alternativeName>
</protein>
<organism>
    <name type="scientific">Emiliania huxleyi</name>
    <name type="common">Coccolithophore</name>
    <name type="synonym">Pontosphaera huxleyi</name>
    <dbReference type="NCBI Taxonomy" id="2903"/>
    <lineage>
        <taxon>Eukaryota</taxon>
        <taxon>Haptista</taxon>
        <taxon>Haptophyta</taxon>
        <taxon>Prymnesiophyceae</taxon>
        <taxon>Isochrysidales</taxon>
        <taxon>Noelaerhabdaceae</taxon>
        <taxon>Emiliania</taxon>
    </lineage>
</organism>
<keyword id="KW-0150">Chloroplast</keyword>
<keyword id="KW-0249">Electron transport</keyword>
<keyword id="KW-0472">Membrane</keyword>
<keyword id="KW-0602">Photosynthesis</keyword>
<keyword id="KW-0934">Plastid</keyword>
<keyword id="KW-0793">Thylakoid</keyword>
<keyword id="KW-0812">Transmembrane</keyword>
<keyword id="KW-1133">Transmembrane helix</keyword>
<keyword id="KW-0813">Transport</keyword>
<reference key="1">
    <citation type="journal article" date="2005" name="DNA Res.">
        <title>The complete plastid genome sequence of the haptophyte Emiliania huxleyi: a comparison to other plastid genomes.</title>
        <authorList>
            <person name="Sanchez-Puerta M.V."/>
            <person name="Bachvaroff T.R."/>
            <person name="Delwiche C.F."/>
        </authorList>
    </citation>
    <scope>NUCLEOTIDE SEQUENCE [LARGE SCALE GENOMIC DNA]</scope>
    <source>
        <strain>CCMP373 / CSIRO-CS-57 / BT6</strain>
    </source>
</reference>
<evidence type="ECO:0000255" key="1">
    <source>
        <dbReference type="HAMAP-Rule" id="MF_00432"/>
    </source>
</evidence>
<proteinExistence type="inferred from homology"/>
<dbReference type="EMBL" id="AY741371">
    <property type="protein sequence ID" value="AAX13888.1"/>
    <property type="molecule type" value="Genomic_DNA"/>
</dbReference>
<dbReference type="RefSeq" id="YP_277389.1">
    <property type="nucleotide sequence ID" value="NC_007288.1"/>
</dbReference>
<dbReference type="SMR" id="Q4G378"/>
<dbReference type="STRING" id="2903.Q4G378"/>
<dbReference type="GeneID" id="3562473"/>
<dbReference type="GO" id="GO:0009535">
    <property type="term" value="C:chloroplast thylakoid membrane"/>
    <property type="evidence" value="ECO:0007669"/>
    <property type="project" value="UniProtKB-SubCell"/>
</dbReference>
<dbReference type="GO" id="GO:0009512">
    <property type="term" value="C:cytochrome b6f complex"/>
    <property type="evidence" value="ECO:0007669"/>
    <property type="project" value="InterPro"/>
</dbReference>
<dbReference type="GO" id="GO:0045158">
    <property type="term" value="F:electron transporter, transferring electrons within cytochrome b6/f complex of photosystem II activity"/>
    <property type="evidence" value="ECO:0007669"/>
    <property type="project" value="UniProtKB-UniRule"/>
</dbReference>
<dbReference type="GO" id="GO:0017004">
    <property type="term" value="P:cytochrome complex assembly"/>
    <property type="evidence" value="ECO:0007669"/>
    <property type="project" value="UniProtKB-UniRule"/>
</dbReference>
<dbReference type="GO" id="GO:0015979">
    <property type="term" value="P:photosynthesis"/>
    <property type="evidence" value="ECO:0007669"/>
    <property type="project" value="UniProtKB-KW"/>
</dbReference>
<dbReference type="HAMAP" id="MF_00432">
    <property type="entry name" value="Cytb6_f_PetG"/>
    <property type="match status" value="1"/>
</dbReference>
<dbReference type="InterPro" id="IPR003683">
    <property type="entry name" value="Cyt_6/f_cplx_su5"/>
</dbReference>
<dbReference type="InterPro" id="IPR036099">
    <property type="entry name" value="Cyt_6/f_cplx_su5_sf"/>
</dbReference>
<dbReference type="NCBIfam" id="NF001907">
    <property type="entry name" value="PRK00665.1"/>
    <property type="match status" value="1"/>
</dbReference>
<dbReference type="Pfam" id="PF02529">
    <property type="entry name" value="PetG"/>
    <property type="match status" value="1"/>
</dbReference>
<dbReference type="PIRSF" id="PIRSF000034">
    <property type="entry name" value="Cyt_b6-f_V"/>
    <property type="match status" value="1"/>
</dbReference>
<dbReference type="SUPFAM" id="SSF103446">
    <property type="entry name" value="PetG subunit of the cytochrome b6f complex"/>
    <property type="match status" value="1"/>
</dbReference>
<accession>Q4G378</accession>